<reference key="1">
    <citation type="journal article" date="1989" name="Nucleic Acids Res.">
        <title>Nucleotide sequence of yeast SCD26, a dosage-dependent suppressor of the cell cycle mutation cdc26.</title>
        <authorList>
            <person name="Dascher C."/>
            <person name="Kuentzel H."/>
        </authorList>
    </citation>
    <scope>NUCLEOTIDE SEQUENCE [GENOMIC DNA]</scope>
</reference>
<reference key="2">
    <citation type="journal article" date="1996" name="Yeast">
        <title>Fifteen open reading frames in a 30.8 kb region of the right arm of chromosome VI from Saccharomyces cerevisiae.</title>
        <authorList>
            <person name="Eki T."/>
            <person name="Naitou M."/>
            <person name="Hagiwara H."/>
            <person name="Abe M."/>
            <person name="Ozawa M."/>
            <person name="Sasanuma S."/>
            <person name="Sasanuma M."/>
            <person name="Tsuchiya Y."/>
            <person name="Shibata T."/>
            <person name="Watanabe K."/>
            <person name="Ono A."/>
            <person name="Yamazaki M."/>
            <person name="Tashiro H."/>
            <person name="Hanaoka F."/>
            <person name="Murakami Y."/>
        </authorList>
    </citation>
    <scope>NUCLEOTIDE SEQUENCE [GENOMIC DNA]</scope>
    <source>
        <strain>ATCC 204511 / S288c / AB972</strain>
    </source>
</reference>
<reference key="3">
    <citation type="journal article" date="1995" name="Nat. Genet.">
        <title>Analysis of the nucleotide sequence of chromosome VI from Saccharomyces cerevisiae.</title>
        <authorList>
            <person name="Murakami Y."/>
            <person name="Naitou M."/>
            <person name="Hagiwara H."/>
            <person name="Shibata T."/>
            <person name="Ozawa M."/>
            <person name="Sasanuma S."/>
            <person name="Sasanuma M."/>
            <person name="Tsuchiya Y."/>
            <person name="Soeda E."/>
            <person name="Yokoyama K."/>
            <person name="Yamazaki M."/>
            <person name="Tashiro H."/>
            <person name="Eki T."/>
        </authorList>
    </citation>
    <scope>NUCLEOTIDE SEQUENCE [LARGE SCALE GENOMIC DNA]</scope>
    <source>
        <strain>ATCC 204508 / S288c</strain>
    </source>
</reference>
<reference key="4">
    <citation type="journal article" date="2014" name="G3 (Bethesda)">
        <title>The reference genome sequence of Saccharomyces cerevisiae: Then and now.</title>
        <authorList>
            <person name="Engel S.R."/>
            <person name="Dietrich F.S."/>
            <person name="Fisk D.G."/>
            <person name="Binkley G."/>
            <person name="Balakrishnan R."/>
            <person name="Costanzo M.C."/>
            <person name="Dwight S.S."/>
            <person name="Hitz B.C."/>
            <person name="Karra K."/>
            <person name="Nash R.S."/>
            <person name="Weng S."/>
            <person name="Wong E.D."/>
            <person name="Lloyd P."/>
            <person name="Skrzypek M.S."/>
            <person name="Miyasato S.R."/>
            <person name="Simison M."/>
            <person name="Cherry J.M."/>
        </authorList>
    </citation>
    <scope>GENOME REANNOTATION</scope>
    <source>
        <strain>ATCC 204508 / S288c</strain>
    </source>
</reference>
<reference key="5">
    <citation type="journal article" date="2007" name="Genome Res.">
        <title>Approaching a complete repository of sequence-verified protein-encoding clones for Saccharomyces cerevisiae.</title>
        <authorList>
            <person name="Hu Y."/>
            <person name="Rolfs A."/>
            <person name="Bhullar B."/>
            <person name="Murthy T.V.S."/>
            <person name="Zhu C."/>
            <person name="Berger M.F."/>
            <person name="Camargo A.A."/>
            <person name="Kelley F."/>
            <person name="McCarron S."/>
            <person name="Jepson D."/>
            <person name="Richardson A."/>
            <person name="Raphael J."/>
            <person name="Moreira D."/>
            <person name="Taycher E."/>
            <person name="Zuo D."/>
            <person name="Mohr S."/>
            <person name="Kane M.F."/>
            <person name="Williamson J."/>
            <person name="Simpson A.J.G."/>
            <person name="Bulyk M.L."/>
            <person name="Harlow E."/>
            <person name="Marsischky G."/>
            <person name="Kolodner R.D."/>
            <person name="LaBaer J."/>
        </authorList>
    </citation>
    <scope>NUCLEOTIDE SEQUENCE [GENOMIC DNA]</scope>
    <source>
        <strain>ATCC 204508 / S288c</strain>
    </source>
</reference>
<reference key="6">
    <citation type="journal article" date="1992" name="Mol. Gen. Genet.">
        <title>The CDC26 gene of Saccharomyces cerevisiae is required for cell growth only at high temperature.</title>
        <authorList>
            <person name="Araki H."/>
            <person name="Awane K."/>
            <person name="Ogawa N."/>
            <person name="Oshima Y."/>
        </authorList>
    </citation>
    <scope>NUCLEOTIDE SEQUENCE [GENOMIC DNA] OF 47-54</scope>
    <source>
        <strain>P-28-24C</strain>
    </source>
</reference>
<reference key="7">
    <citation type="journal article" date="1996" name="Science">
        <title>Identification of subunits of the anaphase-promoting complex of Saccharomyces cerevisiae.</title>
        <authorList>
            <person name="Zachariae W."/>
            <person name="Shin T.H."/>
            <person name="Galova M."/>
            <person name="Obermaier B."/>
            <person name="Nasmyth K."/>
        </authorList>
    </citation>
    <scope>SUBUNIT</scope>
</reference>
<reference key="8">
    <citation type="journal article" date="2004" name="Mol. Cell. Biol.">
        <title>Swm1/Apc13 is an evolutionarily conserved subunit of the anaphase-promoting complex stabilizing the association of Cdc16 and Cdc27.</title>
        <authorList>
            <person name="Schwickart M."/>
            <person name="Havlis J."/>
            <person name="Habermann B."/>
            <person name="Bogdanova A."/>
            <person name="Camasses A."/>
            <person name="Oelschlaegel T."/>
            <person name="Shevchenko A."/>
            <person name="Zachariae W."/>
        </authorList>
    </citation>
    <scope>SUBUNIT</scope>
</reference>
<reference key="9">
    <citation type="journal article" date="2003" name="Nature">
        <title>Global analysis of protein localization in budding yeast.</title>
        <authorList>
            <person name="Huh W.-K."/>
            <person name="Falvo J.V."/>
            <person name="Gerke L.C."/>
            <person name="Carroll A.S."/>
            <person name="Howson R.W."/>
            <person name="Weissman J.S."/>
            <person name="O'Shea E.K."/>
        </authorList>
    </citation>
    <scope>SUBCELLULAR LOCATION [LARGE SCALE ANALYSIS]</scope>
</reference>
<reference key="10">
    <citation type="journal article" date="2009" name="Science">
        <title>Global analysis of Cdk1 substrate phosphorylation sites provides insights into evolution.</title>
        <authorList>
            <person name="Holt L.J."/>
            <person name="Tuch B.B."/>
            <person name="Villen J."/>
            <person name="Johnson A.D."/>
            <person name="Gygi S.P."/>
            <person name="Morgan D.O."/>
        </authorList>
    </citation>
    <scope>PHOSPHORYLATION [LARGE SCALE ANALYSIS] AT SER-12</scope>
    <scope>IDENTIFICATION BY MASS SPECTROMETRY [LARGE SCALE ANALYSIS]</scope>
</reference>
<name>CDC26_YEAST</name>
<accession>P14724</accession>
<accession>D6VTR9</accession>
<protein>
    <recommendedName>
        <fullName>Anaphase-promoting complex subunit CDC26</fullName>
    </recommendedName>
    <alternativeName>
        <fullName>Cell division control protein 26</fullName>
    </alternativeName>
</protein>
<dbReference type="EMBL" id="X17118">
    <property type="protein sequence ID" value="CAA34978.1"/>
    <property type="molecule type" value="Genomic_DNA"/>
</dbReference>
<dbReference type="EMBL" id="D50617">
    <property type="protein sequence ID" value="BAA09275.1"/>
    <property type="molecule type" value="Genomic_DNA"/>
</dbReference>
<dbReference type="EMBL" id="AY558473">
    <property type="protein sequence ID" value="AAS56799.1"/>
    <property type="molecule type" value="Genomic_DNA"/>
</dbReference>
<dbReference type="EMBL" id="S79900">
    <property type="protein sequence ID" value="AAB21293.1"/>
    <property type="molecule type" value="Genomic_DNA"/>
</dbReference>
<dbReference type="EMBL" id="BK006940">
    <property type="protein sequence ID" value="DAA12479.1"/>
    <property type="molecule type" value="Genomic_DNA"/>
</dbReference>
<dbReference type="PIR" id="S56291">
    <property type="entry name" value="COBY26"/>
</dbReference>
<dbReference type="RefSeq" id="NP_116694.1">
    <property type="nucleotide sequence ID" value="NM_001180001.1"/>
</dbReference>
<dbReference type="PDB" id="8A3T">
    <property type="method" value="EM"/>
    <property type="resolution" value="3.50 A"/>
    <property type="chains" value="G/W=1-124"/>
</dbReference>
<dbReference type="PDB" id="8A5Y">
    <property type="method" value="EM"/>
    <property type="resolution" value="4.90 A"/>
    <property type="chains" value="G/W=1-124"/>
</dbReference>
<dbReference type="PDB" id="8A61">
    <property type="method" value="EM"/>
    <property type="resolution" value="5.40 A"/>
    <property type="chains" value="G/W=1-124"/>
</dbReference>
<dbReference type="PDBsum" id="8A3T"/>
<dbReference type="PDBsum" id="8A5Y"/>
<dbReference type="PDBsum" id="8A61"/>
<dbReference type="EMDB" id="EMD-15123"/>
<dbReference type="EMDB" id="EMD-15199"/>
<dbReference type="EMDB" id="EMD-15201"/>
<dbReference type="SMR" id="P14724"/>
<dbReference type="BioGRID" id="31194">
    <property type="interactions" value="135"/>
</dbReference>
<dbReference type="ComplexPortal" id="CPX-756">
    <property type="entry name" value="Anaphase-Promoting core complex"/>
</dbReference>
<dbReference type="ComplexPortal" id="CPX-760">
    <property type="entry name" value="Anaphase-Promoting Complex, CDC20 variant"/>
</dbReference>
<dbReference type="ComplexPortal" id="CPX-761">
    <property type="entry name" value="Anaphase-Promoting Complex, CDH1 variant"/>
</dbReference>
<dbReference type="ComplexPortal" id="CPX-762">
    <property type="entry name" value="Anaphase-Promoting complex AMA1 variant"/>
</dbReference>
<dbReference type="DIP" id="DIP-352N"/>
<dbReference type="FunCoup" id="P14724">
    <property type="interactions" value="285"/>
</dbReference>
<dbReference type="IntAct" id="P14724">
    <property type="interactions" value="19"/>
</dbReference>
<dbReference type="MINT" id="P14724"/>
<dbReference type="STRING" id="4932.YFR036W"/>
<dbReference type="iPTMnet" id="P14724"/>
<dbReference type="PaxDb" id="4932-YFR036W"/>
<dbReference type="PeptideAtlas" id="P14724"/>
<dbReference type="EnsemblFungi" id="YFR036W_mRNA">
    <property type="protein sequence ID" value="YFR036W"/>
    <property type="gene ID" value="YFR036W"/>
</dbReference>
<dbReference type="GeneID" id="850597"/>
<dbReference type="KEGG" id="sce:YFR036W"/>
<dbReference type="AGR" id="SGD:S000001932"/>
<dbReference type="SGD" id="S000001932">
    <property type="gene designation" value="CDC26"/>
</dbReference>
<dbReference type="VEuPathDB" id="FungiDB:YFR036W"/>
<dbReference type="HOGENOM" id="CLU_140545_0_0_1"/>
<dbReference type="InParanoid" id="P14724"/>
<dbReference type="OrthoDB" id="4056532at2759"/>
<dbReference type="BioCyc" id="YEAST:G3O-30483-MONOMER"/>
<dbReference type="UniPathway" id="UPA00143"/>
<dbReference type="BioGRID-ORCS" id="850597">
    <property type="hits" value="9 hits in 10 CRISPR screens"/>
</dbReference>
<dbReference type="ChiTaRS" id="CDC26">
    <property type="organism name" value="yeast"/>
</dbReference>
<dbReference type="PRO" id="PR:P14724"/>
<dbReference type="Proteomes" id="UP000002311">
    <property type="component" value="Chromosome VI"/>
</dbReference>
<dbReference type="RNAct" id="P14724">
    <property type="molecule type" value="protein"/>
</dbReference>
<dbReference type="GO" id="GO:0005680">
    <property type="term" value="C:anaphase-promoting complex"/>
    <property type="evidence" value="ECO:0000314"/>
    <property type="project" value="SGD"/>
</dbReference>
<dbReference type="GO" id="GO:0005829">
    <property type="term" value="C:cytosol"/>
    <property type="evidence" value="ECO:0000314"/>
    <property type="project" value="SGD"/>
</dbReference>
<dbReference type="GO" id="GO:0005634">
    <property type="term" value="C:nucleus"/>
    <property type="evidence" value="ECO:0000314"/>
    <property type="project" value="SGD"/>
</dbReference>
<dbReference type="GO" id="GO:0031145">
    <property type="term" value="P:anaphase-promoting complex-dependent catabolic process"/>
    <property type="evidence" value="ECO:0000314"/>
    <property type="project" value="ComplexPortal"/>
</dbReference>
<dbReference type="GO" id="GO:0051301">
    <property type="term" value="P:cell division"/>
    <property type="evidence" value="ECO:0007669"/>
    <property type="project" value="UniProtKB-KW"/>
</dbReference>
<dbReference type="GO" id="GO:0006325">
    <property type="term" value="P:chromatin organization"/>
    <property type="evidence" value="ECO:0000316"/>
    <property type="project" value="SGD"/>
</dbReference>
<dbReference type="GO" id="GO:0016567">
    <property type="term" value="P:protein ubiquitination"/>
    <property type="evidence" value="ECO:0000314"/>
    <property type="project" value="ComplexPortal"/>
</dbReference>
<dbReference type="GO" id="GO:0051445">
    <property type="term" value="P:regulation of meiotic cell cycle"/>
    <property type="evidence" value="ECO:0000303"/>
    <property type="project" value="ComplexPortal"/>
</dbReference>
<dbReference type="GO" id="GO:0007346">
    <property type="term" value="P:regulation of mitotic cell cycle"/>
    <property type="evidence" value="ECO:0000303"/>
    <property type="project" value="ComplexPortal"/>
</dbReference>
<dbReference type="InterPro" id="IPR018860">
    <property type="entry name" value="APC_suCDC26"/>
</dbReference>
<dbReference type="Pfam" id="PF10471">
    <property type="entry name" value="ANAPC_CDC26"/>
    <property type="match status" value="1"/>
</dbReference>
<feature type="chain" id="PRO_0000089446" description="Anaphase-promoting complex subunit CDC26">
    <location>
        <begin position="1"/>
        <end position="124"/>
    </location>
</feature>
<feature type="region of interest" description="Disordered" evidence="1">
    <location>
        <begin position="40"/>
        <end position="87"/>
    </location>
</feature>
<feature type="region of interest" description="Disordered" evidence="1">
    <location>
        <begin position="99"/>
        <end position="124"/>
    </location>
</feature>
<feature type="compositionally biased region" description="Polar residues" evidence="1">
    <location>
        <begin position="47"/>
        <end position="59"/>
    </location>
</feature>
<feature type="compositionally biased region" description="Acidic residues" evidence="1">
    <location>
        <begin position="64"/>
        <end position="78"/>
    </location>
</feature>
<feature type="compositionally biased region" description="Polar residues" evidence="1">
    <location>
        <begin position="99"/>
        <end position="116"/>
    </location>
</feature>
<feature type="modified residue" description="Phosphoserine" evidence="7">
    <location>
        <position position="12"/>
    </location>
</feature>
<feature type="sequence conflict" description="In Ref. 1; CAA34978." evidence="5" ref="1">
    <original>S</original>
    <variation>F</variation>
    <location>
        <position position="50"/>
    </location>
</feature>
<feature type="sequence conflict" description="In Ref. 1; CAA34978." evidence="5" ref="1">
    <original>IREE</original>
    <variation>TARNNSISAYAHAHAHAHASTFTFTYKISSL</variation>
    <location>
        <begin position="121"/>
        <end position="124"/>
    </location>
</feature>
<feature type="helix" evidence="8">
    <location>
        <begin position="13"/>
        <end position="34"/>
    </location>
</feature>
<proteinExistence type="evidence at protein level"/>
<organism>
    <name type="scientific">Saccharomyces cerevisiae (strain ATCC 204508 / S288c)</name>
    <name type="common">Baker's yeast</name>
    <dbReference type="NCBI Taxonomy" id="559292"/>
    <lineage>
        <taxon>Eukaryota</taxon>
        <taxon>Fungi</taxon>
        <taxon>Dikarya</taxon>
        <taxon>Ascomycota</taxon>
        <taxon>Saccharomycotina</taxon>
        <taxon>Saccharomycetes</taxon>
        <taxon>Saccharomycetales</taxon>
        <taxon>Saccharomycetaceae</taxon>
        <taxon>Saccharomyces</taxon>
    </lineage>
</organism>
<sequence>MIRRAPTTLQLSHDDVTSLIDDLNEQKLKQQLNIEKTKYFQGKNGGSLHSNTDFQDTSQNIEDNNNDNDNDIDEDDDMSSYNDKAASVAHTRVLNSLHLSTDSNTAHETSNANDNHNPFYIREE</sequence>
<evidence type="ECO:0000256" key="1">
    <source>
        <dbReference type="SAM" id="MobiDB-lite"/>
    </source>
</evidence>
<evidence type="ECO:0000269" key="2">
    <source>
    </source>
</evidence>
<evidence type="ECO:0000269" key="3">
    <source>
    </source>
</evidence>
<evidence type="ECO:0000269" key="4">
    <source>
    </source>
</evidence>
<evidence type="ECO:0000305" key="5"/>
<evidence type="ECO:0000305" key="6">
    <source>
    </source>
</evidence>
<evidence type="ECO:0007744" key="7">
    <source>
    </source>
</evidence>
<evidence type="ECO:0007829" key="8">
    <source>
        <dbReference type="PDB" id="8A3T"/>
    </source>
</evidence>
<keyword id="KW-0002">3D-structure</keyword>
<keyword id="KW-0131">Cell cycle</keyword>
<keyword id="KW-0132">Cell division</keyword>
<keyword id="KW-0498">Mitosis</keyword>
<keyword id="KW-0539">Nucleus</keyword>
<keyword id="KW-0597">Phosphoprotein</keyword>
<keyword id="KW-1185">Reference proteome</keyword>
<keyword id="KW-0833">Ubl conjugation pathway</keyword>
<comment type="function">
    <text>Component of the anaphase promoting complex/cyclosome (APC/C), a cell cycle-regulated E3 ubiquitin-protein ligase complex that controls progression through mitosis and the G1 phase of the cell cycle. The APC/C is thought to confer substrate specificity and, in the presence of ubiquitin-conjugating E2 enzymes, it catalyzes the formation of protein-ubiquitin conjugates that are subsequently degraded by the 26S proteasome. In early mitosis, the APC/C is activated by CDC20 and targets securin PDS1, the B-type cyclin CLB5, and other anaphase inhibitory proteins for proteolysis, thereby triggering the separation of sister chromatids at the metaphase-to-anaphase transition. In late mitosis and in G1, degradation of CLB5 allows activation of the APC/C by CDH1, which is needed to destroy CDC20 and the B-type cyclin CLB2 to allow exit from mitosis and creating the low CDK state necessary for cytokinesis and for reforming prereplicative complexes in G1 prior to another round of replication.</text>
</comment>
<comment type="pathway">
    <text>Protein modification; protein ubiquitination.</text>
</comment>
<comment type="subunit">
    <text evidence="3 4">The APC/C is composed of at least 13 subunits that stay tightly associated throughout the cell cycle: APC1, APC2, APC4, APC5, APC9, APC11, CDC16, CDC23, CDC26, CDC27, DOC1, MND2 and SWM1. CDC26 is required to tether the essential subunits APC9, CDC27 and CDC16 to the complex.</text>
</comment>
<comment type="subcellular location">
    <subcellularLocation>
        <location evidence="2">Nucleus</location>
    </subcellularLocation>
</comment>
<comment type="similarity">
    <text evidence="5">Belongs to the CDC26 family.</text>
</comment>
<comment type="caution">
    <text evidence="6">Was originally thought to be a suppressor of CDC26.</text>
</comment>
<gene>
    <name type="primary">CDC26</name>
    <name type="synonym">HIT3</name>
    <name type="synonym">SCD26</name>
    <name type="ordered locus">YFR036W</name>
</gene>